<evidence type="ECO:0000255" key="1">
    <source>
        <dbReference type="HAMAP-Rule" id="MF_00017"/>
    </source>
</evidence>
<accession>B9KLQ5</accession>
<sequence>MAEAPGDIERLIELMARLPGLGPRSARRAVLLMLKKRGAVMAPLAQAMAEVATSARDCVRCGNITNADLCGICRDERRATGELCVVEDVADLWALERAGAFRGRYHVLGGVLSALDSVGPEELRIPRLAERVREEGISEVILALNATVDGQTTAHYIADVLEPSGVQVTSLAQGVPIGGELDYLDDGTIGAALRARRRF</sequence>
<feature type="chain" id="PRO_1000195405" description="Recombination protein RecR">
    <location>
        <begin position="1"/>
        <end position="199"/>
    </location>
</feature>
<feature type="domain" description="Toprim" evidence="1">
    <location>
        <begin position="81"/>
        <end position="176"/>
    </location>
</feature>
<feature type="zinc finger region" description="C4-type" evidence="1">
    <location>
        <begin position="58"/>
        <end position="73"/>
    </location>
</feature>
<comment type="function">
    <text evidence="1">May play a role in DNA repair. It seems to be involved in an RecBC-independent recombinational process of DNA repair. It may act with RecF and RecO.</text>
</comment>
<comment type="similarity">
    <text evidence="1">Belongs to the RecR family.</text>
</comment>
<protein>
    <recommendedName>
        <fullName evidence="1">Recombination protein RecR</fullName>
    </recommendedName>
</protein>
<organism>
    <name type="scientific">Cereibacter sphaeroides (strain KD131 / KCTC 12085)</name>
    <name type="common">Rhodobacter sphaeroides</name>
    <dbReference type="NCBI Taxonomy" id="557760"/>
    <lineage>
        <taxon>Bacteria</taxon>
        <taxon>Pseudomonadati</taxon>
        <taxon>Pseudomonadota</taxon>
        <taxon>Alphaproteobacteria</taxon>
        <taxon>Rhodobacterales</taxon>
        <taxon>Paracoccaceae</taxon>
        <taxon>Cereibacter</taxon>
    </lineage>
</organism>
<proteinExistence type="inferred from homology"/>
<gene>
    <name evidence="1" type="primary">recR</name>
    <name type="ordered locus">RSKD131_2070</name>
</gene>
<name>RECR_CERSK</name>
<keyword id="KW-0227">DNA damage</keyword>
<keyword id="KW-0233">DNA recombination</keyword>
<keyword id="KW-0234">DNA repair</keyword>
<keyword id="KW-0479">Metal-binding</keyword>
<keyword id="KW-0862">Zinc</keyword>
<keyword id="KW-0863">Zinc-finger</keyword>
<dbReference type="EMBL" id="CP001150">
    <property type="protein sequence ID" value="ACM01930.1"/>
    <property type="molecule type" value="Genomic_DNA"/>
</dbReference>
<dbReference type="RefSeq" id="WP_002720894.1">
    <property type="nucleotide sequence ID" value="NC_011963.1"/>
</dbReference>
<dbReference type="SMR" id="B9KLQ5"/>
<dbReference type="GeneID" id="67447462"/>
<dbReference type="KEGG" id="rsk:RSKD131_2070"/>
<dbReference type="HOGENOM" id="CLU_060739_1_1_5"/>
<dbReference type="GO" id="GO:0003677">
    <property type="term" value="F:DNA binding"/>
    <property type="evidence" value="ECO:0007669"/>
    <property type="project" value="UniProtKB-UniRule"/>
</dbReference>
<dbReference type="GO" id="GO:0008270">
    <property type="term" value="F:zinc ion binding"/>
    <property type="evidence" value="ECO:0007669"/>
    <property type="project" value="UniProtKB-KW"/>
</dbReference>
<dbReference type="GO" id="GO:0006310">
    <property type="term" value="P:DNA recombination"/>
    <property type="evidence" value="ECO:0007669"/>
    <property type="project" value="UniProtKB-UniRule"/>
</dbReference>
<dbReference type="GO" id="GO:0006281">
    <property type="term" value="P:DNA repair"/>
    <property type="evidence" value="ECO:0007669"/>
    <property type="project" value="UniProtKB-UniRule"/>
</dbReference>
<dbReference type="CDD" id="cd01025">
    <property type="entry name" value="TOPRIM_recR"/>
    <property type="match status" value="1"/>
</dbReference>
<dbReference type="Gene3D" id="3.40.1360.10">
    <property type="match status" value="1"/>
</dbReference>
<dbReference type="Gene3D" id="1.10.8.420">
    <property type="entry name" value="RecR Domain 1"/>
    <property type="match status" value="1"/>
</dbReference>
<dbReference type="HAMAP" id="MF_00017">
    <property type="entry name" value="RecR"/>
    <property type="match status" value="1"/>
</dbReference>
<dbReference type="InterPro" id="IPR000093">
    <property type="entry name" value="DNA_Rcmb_RecR"/>
</dbReference>
<dbReference type="InterPro" id="IPR023627">
    <property type="entry name" value="Rcmb_RecR"/>
</dbReference>
<dbReference type="InterPro" id="IPR015967">
    <property type="entry name" value="Rcmb_RecR_Znf"/>
</dbReference>
<dbReference type="InterPro" id="IPR006171">
    <property type="entry name" value="TOPRIM_dom"/>
</dbReference>
<dbReference type="InterPro" id="IPR034137">
    <property type="entry name" value="TOPRIM_RecR"/>
</dbReference>
<dbReference type="NCBIfam" id="TIGR00615">
    <property type="entry name" value="recR"/>
    <property type="match status" value="1"/>
</dbReference>
<dbReference type="PANTHER" id="PTHR30446">
    <property type="entry name" value="RECOMBINATION PROTEIN RECR"/>
    <property type="match status" value="1"/>
</dbReference>
<dbReference type="PANTHER" id="PTHR30446:SF0">
    <property type="entry name" value="RECOMBINATION PROTEIN RECR"/>
    <property type="match status" value="1"/>
</dbReference>
<dbReference type="Pfam" id="PF21175">
    <property type="entry name" value="RecR_C"/>
    <property type="match status" value="1"/>
</dbReference>
<dbReference type="Pfam" id="PF21176">
    <property type="entry name" value="RecR_HhH"/>
    <property type="match status" value="1"/>
</dbReference>
<dbReference type="Pfam" id="PF02132">
    <property type="entry name" value="RecR_ZnF"/>
    <property type="match status" value="1"/>
</dbReference>
<dbReference type="Pfam" id="PF13662">
    <property type="entry name" value="Toprim_4"/>
    <property type="match status" value="1"/>
</dbReference>
<dbReference type="SMART" id="SM00493">
    <property type="entry name" value="TOPRIM"/>
    <property type="match status" value="1"/>
</dbReference>
<dbReference type="SUPFAM" id="SSF111304">
    <property type="entry name" value="Recombination protein RecR"/>
    <property type="match status" value="1"/>
</dbReference>
<dbReference type="PROSITE" id="PS50880">
    <property type="entry name" value="TOPRIM"/>
    <property type="match status" value="1"/>
</dbReference>
<reference key="1">
    <citation type="journal article" date="2009" name="J. Bacteriol.">
        <title>Complete genome sequence of Rhodobacter sphaeroides KD131.</title>
        <authorList>
            <person name="Lim S.-K."/>
            <person name="Kim S.J."/>
            <person name="Cha S.H."/>
            <person name="Oh Y.-K."/>
            <person name="Rhee H.-J."/>
            <person name="Kim M.-S."/>
            <person name="Lee J.K."/>
        </authorList>
    </citation>
    <scope>NUCLEOTIDE SEQUENCE [LARGE SCALE GENOMIC DNA]</scope>
    <source>
        <strain>KD131 / KCTC 12085</strain>
    </source>
</reference>